<name>TX21A_PHONI</name>
<dbReference type="PIR" id="C44336">
    <property type="entry name" value="C44336"/>
</dbReference>
<dbReference type="ArachnoServer" id="AS000261">
    <property type="toxin name" value="omega-ctenitoxin-Pn2a"/>
</dbReference>
<dbReference type="GO" id="GO:0005576">
    <property type="term" value="C:extracellular region"/>
    <property type="evidence" value="ECO:0007669"/>
    <property type="project" value="UniProtKB-SubCell"/>
</dbReference>
<dbReference type="GO" id="GO:0005246">
    <property type="term" value="F:calcium channel regulator activity"/>
    <property type="evidence" value="ECO:0007669"/>
    <property type="project" value="UniProtKB-KW"/>
</dbReference>
<dbReference type="GO" id="GO:0090729">
    <property type="term" value="F:toxin activity"/>
    <property type="evidence" value="ECO:0007669"/>
    <property type="project" value="UniProtKB-KW"/>
</dbReference>
<evidence type="ECO:0000250" key="1"/>
<evidence type="ECO:0000269" key="2">
    <source>
    </source>
</evidence>
<evidence type="ECO:0000269" key="3">
    <source>
    </source>
</evidence>
<evidence type="ECO:0000269" key="4">
    <source>
    </source>
</evidence>
<evidence type="ECO:0000269" key="5">
    <source>
    </source>
</evidence>
<evidence type="ECO:0000269" key="6">
    <source>
    </source>
</evidence>
<evidence type="ECO:0000269" key="7">
    <source>
    </source>
</evidence>
<evidence type="ECO:0000269" key="8">
    <source>
    </source>
</evidence>
<evidence type="ECO:0000303" key="9">
    <source>
    </source>
</evidence>
<evidence type="ECO:0000303" key="10">
    <source>
    </source>
</evidence>
<evidence type="ECO:0000303" key="11">
    <source>
    </source>
</evidence>
<evidence type="ECO:0000303" key="12">
    <source>
    </source>
</evidence>
<evidence type="ECO:0000305" key="13"/>
<evidence type="ECO:0000305" key="14">
    <source>
    </source>
</evidence>
<evidence type="ECO:0000305" key="15">
    <source>
    </source>
</evidence>
<sequence>GCANAYKSCNGPHTCCWGYNGYKKACICSGXNWK</sequence>
<proteinExistence type="evidence at protein level"/>
<organism>
    <name type="scientific">Phoneutria nigriventer</name>
    <name type="common">Brazilian armed spider</name>
    <name type="synonym">Ctenus nigriventer</name>
    <dbReference type="NCBI Taxonomy" id="6918"/>
    <lineage>
        <taxon>Eukaryota</taxon>
        <taxon>Metazoa</taxon>
        <taxon>Ecdysozoa</taxon>
        <taxon>Arthropoda</taxon>
        <taxon>Chelicerata</taxon>
        <taxon>Arachnida</taxon>
        <taxon>Araneae</taxon>
        <taxon>Araneomorphae</taxon>
        <taxon>Entelegynae</taxon>
        <taxon>Lycosoidea</taxon>
        <taxon>Ctenidae</taxon>
        <taxon>Phoneutria</taxon>
    </lineage>
</organism>
<protein>
    <recommendedName>
        <fullName evidence="13">Omega-ctenitoxin-Pn2a</fullName>
        <shortName evidence="13">Omega-CNTX-Pn2a</shortName>
    </recommendedName>
    <alternativeName>
        <fullName evidence="10 11 12">Neurotoxin Tx3-3</fullName>
    </alternativeName>
    <alternativeName>
        <fullName evidence="9">Omega-PnTx3-3</fullName>
        <shortName evidence="10">PnTx3-3</shortName>
    </alternativeName>
</protein>
<reference key="1">
    <citation type="journal article" date="1993" name="Toxicon">
        <title>Purification and amino acid sequences of six Tx3 type neurotoxins from the venom of the Brazilian 'armed' spider Phoneutria nigriventer (Keys).</title>
        <authorList>
            <person name="Cordeiro M.N."/>
            <person name="De Figueiredo S.G."/>
            <person name="Valentim A.D.C."/>
            <person name="Diniz C.R."/>
            <person name="von Eickstedt V.R.D."/>
            <person name="Gilroy J."/>
            <person name="Richardson M."/>
        </authorList>
    </citation>
    <scope>PROTEIN SEQUENCE</scope>
    <source>
        <tissue>Venom</tissue>
    </source>
</reference>
<reference key="2">
    <citation type="journal article" date="2006" name="Comp. Biochem. Physiol.">
        <title>Comparison of the partial proteomes of the venoms of Brazilian spiders of the genus Phoneutria.</title>
        <authorList>
            <person name="Richardson M."/>
            <person name="Pimenta A.M."/>
            <person name="Bemquerer M.P."/>
            <person name="Santoro M.M."/>
            <person name="Beirao P.S."/>
            <person name="Lima M.E."/>
            <person name="Figueiredo S.G."/>
            <person name="Bloch C. Jr."/>
            <person name="Vasconcelos E.A."/>
            <person name="Campos F.A."/>
            <person name="Gomes P.C."/>
            <person name="Cordeiro M.N."/>
        </authorList>
    </citation>
    <scope>PROTEIN SEQUENCE OF 1-32</scope>
    <scope>SUBCELLULAR LOCATION</scope>
    <source>
        <tissue>Venom</tissue>
    </source>
</reference>
<reference key="3">
    <citation type="journal article" date="1996" name="Biochem. J.">
        <title>A novel tool for the investigation of glutamate release from rat cerebrocortical synaptosomes: the toxin Tx3-3 from the venom of the spider Phoneutria nigriventer.</title>
        <authorList>
            <person name="Prado M.A.M."/>
            <person name="Guatimosim C."/>
            <person name="Gomez M.V."/>
            <person name="Diniz C.R."/>
            <person name="Cordeiro M.N."/>
            <person name="Romano-Silva M.A."/>
        </authorList>
    </citation>
    <scope>FUNCTION</scope>
    <source>
        <tissue>Venom</tissue>
    </source>
</reference>
<reference key="4">
    <citation type="journal article" date="1997" name="Br. J. Pharmacol.">
        <title>A toxin from the spider Phoneutria nigriventer that blocks calcium channels coupled to exocytosis.</title>
        <authorList>
            <person name="Guatimosim C."/>
            <person name="Romano-Silva M.A."/>
            <person name="Cruz J.S."/>
            <person name="Beirao P.S.L."/>
            <person name="Kalapothakis E."/>
            <person name="Moraes-Santos T."/>
            <person name="Cordeiro M.N."/>
            <person name="Diniz C.R."/>
            <person name="Gomez M.V."/>
            <person name="Prado M.A.M."/>
        </authorList>
    </citation>
    <scope>FUNCTION</scope>
    <source>
        <tissue>Venom</tissue>
    </source>
</reference>
<reference key="5">
    <citation type="journal article" date="1998" name="NeuroReport">
        <title>Phoneutria nigriventer toxins block tityustoxin-induced calcium influx in synaptosomes.</title>
        <authorList>
            <person name="Miranda D.M."/>
            <person name="Romano-Silva M.A."/>
            <person name="Kalapothakis E."/>
            <person name="Diniz C.R."/>
            <person name="Cordeiro M.N."/>
            <person name="Santos T.M."/>
            <person name="Prado M.A.M."/>
            <person name="Gomez M.V."/>
        </authorList>
    </citation>
    <scope>FUNCTION</scope>
    <source>
        <tissue>Venom</tissue>
    </source>
</reference>
<reference key="6">
    <citation type="journal article" date="2000" name="Neuropharmacology">
        <title>Inhibition of neuronal high-voltage activated calcium channels by the omega-Phoneutria nigriventer Tx3-3 peptide toxin.</title>
        <authorList>
            <person name="Leao R.M."/>
            <person name="Cruz J.S."/>
            <person name="Diniz C.R."/>
            <person name="Cordeiro M.N."/>
            <person name="Beirao P.S.L."/>
        </authorList>
    </citation>
    <scope>FUNCTION</scope>
    <source>
        <tissue>Venom</tissue>
    </source>
</reference>
<reference key="7">
    <citation type="journal article" date="2001" name="Brain Res. Bull.">
        <title>Spider neurotoxins block the beta scorpion toxin-induced calcium uptake in rat brain cortical synaptosomes.</title>
        <authorList>
            <person name="Miranda D.M."/>
            <person name="Romano-Silva M.A."/>
            <person name="Kalapothakis E."/>
            <person name="Diniz C.R."/>
            <person name="Cordeiro M.N."/>
            <person name="Moraes-Santos T."/>
            <person name="De Marco L.A."/>
            <person name="Prado M.A.M."/>
            <person name="Gomez M.V."/>
        </authorList>
    </citation>
    <scope>FUNCTION</scope>
    <source>
        <tissue>Venom</tissue>
    </source>
</reference>
<reference key="8">
    <citation type="journal article" date="2009" name="Hippocampus">
        <title>Phoneutria spider toxins block ischemia-induced glutamate release, neuronal death, and loss of neurotransmission in hippocampus.</title>
        <authorList>
            <person name="Pinheiro A.C."/>
            <person name="da Silva A.J."/>
            <person name="Prado M.A."/>
            <person name="Cordeiro M.D."/>
            <person name="Richardson M."/>
            <person name="Batista M.C."/>
            <person name="de Castro Junior C.J."/>
            <person name="Massensini A.R."/>
            <person name="Guatimosim C."/>
            <person name="Romano-Silva M.A."/>
            <person name="Kushmerick C."/>
            <person name="Gomez M.V."/>
        </authorList>
    </citation>
    <scope>FUNCTION</scope>
</reference>
<feature type="chain" id="PRO_0000087634" description="Omega-ctenitoxin-Pn2a" evidence="15">
    <location>
        <begin position="1"/>
        <end position="34" status="greater than"/>
    </location>
</feature>
<feature type="disulfide bond" evidence="1">
    <location>
        <begin position="2"/>
        <end position="16"/>
    </location>
</feature>
<feature type="disulfide bond" evidence="1">
    <location>
        <begin position="9"/>
        <end position="26"/>
    </location>
</feature>
<feature type="disulfide bond" evidence="1">
    <location>
        <begin position="15"/>
        <end position="28"/>
    </location>
</feature>
<feature type="non-terminal residue" evidence="15">
    <location>
        <position position="34"/>
    </location>
</feature>
<keyword id="KW-0108">Calcium channel impairing toxin</keyword>
<keyword id="KW-0903">Direct protein sequencing</keyword>
<keyword id="KW-1015">Disulfide bond</keyword>
<keyword id="KW-0872">Ion channel impairing toxin</keyword>
<keyword id="KW-0960">Knottin</keyword>
<keyword id="KW-0528">Neurotoxin</keyword>
<keyword id="KW-0964">Secreted</keyword>
<keyword id="KW-0800">Toxin</keyword>
<keyword id="KW-1218">Voltage-gated calcium channel impairing toxin</keyword>
<comment type="function">
    <text evidence="2 3 5 6 7 8">Inhibits all known high-voltage activated calcium channels (L-, P/Q- and R-type currents) (Cav), and most effectively the P/Q- (Cav2.1/CACNA1A) and R-type (Cav2.3/CACNA1E) currents (PubMed:10884557). In rat brain, inhibits glutamate release, neuronal death and loss of neurotransmission in the hippocampus resulting from ischemia. In vivo, induces rapid general flaccid paralysis followed by death in 10-30 minutes at dose levels of 5 ug per mouse.</text>
</comment>
<comment type="subcellular location">
    <subcellularLocation>
        <location evidence="4">Secreted</location>
    </subcellularLocation>
</comment>
<comment type="tissue specificity">
    <text evidence="14">Expressed by the venom gland.</text>
</comment>
<comment type="domain">
    <text evidence="1">The presence of a 'disulfide through disulfide knot' structurally defines this protein as a knottin.</text>
</comment>
<comment type="similarity">
    <text evidence="13">Belongs to the neurotoxin 02 (plectoxin) family. 01 (Tx3) subfamily.</text>
</comment>
<accession>P81789</accession>